<feature type="chain" id="PRO_1000090985" description="Aspartate--tRNA(Asp/Asn) ligase">
    <location>
        <begin position="1"/>
        <end position="602"/>
    </location>
</feature>
<feature type="region of interest" description="Aspartate" evidence="1">
    <location>
        <begin position="199"/>
        <end position="202"/>
    </location>
</feature>
<feature type="binding site" evidence="1">
    <location>
        <position position="175"/>
    </location>
    <ligand>
        <name>L-aspartate</name>
        <dbReference type="ChEBI" id="CHEBI:29991"/>
    </ligand>
</feature>
<feature type="binding site" evidence="1">
    <location>
        <begin position="221"/>
        <end position="223"/>
    </location>
    <ligand>
        <name>ATP</name>
        <dbReference type="ChEBI" id="CHEBI:30616"/>
    </ligand>
</feature>
<feature type="binding site" evidence="1">
    <location>
        <position position="221"/>
    </location>
    <ligand>
        <name>L-aspartate</name>
        <dbReference type="ChEBI" id="CHEBI:29991"/>
    </ligand>
</feature>
<feature type="binding site" evidence="1">
    <location>
        <position position="230"/>
    </location>
    <ligand>
        <name>ATP</name>
        <dbReference type="ChEBI" id="CHEBI:30616"/>
    </ligand>
</feature>
<feature type="binding site" evidence="1">
    <location>
        <position position="458"/>
    </location>
    <ligand>
        <name>L-aspartate</name>
        <dbReference type="ChEBI" id="CHEBI:29991"/>
    </ligand>
</feature>
<feature type="binding site" evidence="1">
    <location>
        <position position="492"/>
    </location>
    <ligand>
        <name>ATP</name>
        <dbReference type="ChEBI" id="CHEBI:30616"/>
    </ligand>
</feature>
<feature type="binding site" evidence="1">
    <location>
        <position position="499"/>
    </location>
    <ligand>
        <name>L-aspartate</name>
        <dbReference type="ChEBI" id="CHEBI:29991"/>
    </ligand>
</feature>
<feature type="binding site" evidence="1">
    <location>
        <begin position="544"/>
        <end position="547"/>
    </location>
    <ligand>
        <name>ATP</name>
        <dbReference type="ChEBI" id="CHEBI:30616"/>
    </ligand>
</feature>
<feature type="site" description="Important for tRNA non-discrimination" evidence="1">
    <location>
        <position position="33"/>
    </location>
</feature>
<feature type="site" description="Important for tRNA non-discrimination" evidence="1">
    <location>
        <position position="84"/>
    </location>
</feature>
<sequence length="602" mass="68030">MSSMRTHYCGLVTEQFSGQEVALTGWVQRRRDHGGVIFIDLRDREGLVQVVCDPDRPEMFKAAEEIRNEFCIRVTGKVRPRPAGTENANLTSGKIEVLCHELTVLNPSVTPPFQLDDDNLSETTRLTHRVLDLRRPQMQYNLRLRYKVAMEVRKFLDAQGFIDIETPMLGKSTPEGARDYLVPSRVNPGHFFALPQSPQIFKQMLMVSGFDRYYQITKCFRDEDLRADRQPEFTQIDCETSFLTEQEIRDLFEDMMRTVFKNAIDVDLDAKFPVMEFREAMARFGSDKPDLRVKLEFTELTEVMKDVDFKVFSGPANSDNGRVVGLRVPGGGAISRGEIDAYTQFVGIYGAKGLAWIKVNEVAKGRDGLQSPIVKNLHDAAIAEILKRTGAQDGDIIFFGADKAKVVNDSIGALRLKIGHSDFGKANGLFEDAWKPLWVVDFPMFEYDEEDARWVAMHHPFTSPKDEHLEYLETDPGKCLAKAYDMVLNGWEMGGGSVRIFRSDIQSKVFRALKINDEEARAKFGYLLDALQYGAPPHGGLAFGLDRIVTMMAGADSIRDVIAFPKTQRAQDLLTQAPSSVDEKQLRELHIRLRTAEPKPNA</sequence>
<proteinExistence type="inferred from homology"/>
<accession>B2AH15</accession>
<keyword id="KW-0030">Aminoacyl-tRNA synthetase</keyword>
<keyword id="KW-0067">ATP-binding</keyword>
<keyword id="KW-0963">Cytoplasm</keyword>
<keyword id="KW-0436">Ligase</keyword>
<keyword id="KW-0547">Nucleotide-binding</keyword>
<keyword id="KW-0648">Protein biosynthesis</keyword>
<evidence type="ECO:0000255" key="1">
    <source>
        <dbReference type="HAMAP-Rule" id="MF_00044"/>
    </source>
</evidence>
<comment type="function">
    <text evidence="1">Aspartyl-tRNA synthetase with relaxed tRNA specificity since it is able to aspartylate not only its cognate tRNA(Asp) but also tRNA(Asn). Reaction proceeds in two steps: L-aspartate is first activated by ATP to form Asp-AMP and then transferred to the acceptor end of tRNA(Asp/Asn).</text>
</comment>
<comment type="catalytic activity">
    <reaction evidence="1">
        <text>tRNA(Asx) + L-aspartate + ATP = L-aspartyl-tRNA(Asx) + AMP + diphosphate</text>
        <dbReference type="Rhea" id="RHEA:18349"/>
        <dbReference type="Rhea" id="RHEA-COMP:9710"/>
        <dbReference type="Rhea" id="RHEA-COMP:9711"/>
        <dbReference type="ChEBI" id="CHEBI:29991"/>
        <dbReference type="ChEBI" id="CHEBI:30616"/>
        <dbReference type="ChEBI" id="CHEBI:33019"/>
        <dbReference type="ChEBI" id="CHEBI:78442"/>
        <dbReference type="ChEBI" id="CHEBI:78516"/>
        <dbReference type="ChEBI" id="CHEBI:456215"/>
        <dbReference type="EC" id="6.1.1.23"/>
    </reaction>
</comment>
<comment type="subunit">
    <text evidence="1">Homodimer.</text>
</comment>
<comment type="subcellular location">
    <subcellularLocation>
        <location evidence="1">Cytoplasm</location>
    </subcellularLocation>
</comment>
<comment type="similarity">
    <text evidence="1">Belongs to the class-II aminoacyl-tRNA synthetase family. Type 1 subfamily.</text>
</comment>
<protein>
    <recommendedName>
        <fullName evidence="1">Aspartate--tRNA(Asp/Asn) ligase</fullName>
        <ecNumber evidence="1">6.1.1.23</ecNumber>
    </recommendedName>
    <alternativeName>
        <fullName evidence="1">Aspartyl-tRNA synthetase</fullName>
        <shortName evidence="1">AspRS</shortName>
    </alternativeName>
    <alternativeName>
        <fullName evidence="1">Non-discriminating aspartyl-tRNA synthetase</fullName>
        <shortName evidence="1">ND-AspRS</shortName>
    </alternativeName>
</protein>
<name>SYDND_CUPTR</name>
<gene>
    <name evidence="1" type="primary">aspS</name>
    <name type="ordered locus">RALTA_A0395</name>
</gene>
<dbReference type="EC" id="6.1.1.23" evidence="1"/>
<dbReference type="EMBL" id="CU633749">
    <property type="protein sequence ID" value="CAP63064.1"/>
    <property type="molecule type" value="Genomic_DNA"/>
</dbReference>
<dbReference type="RefSeq" id="WP_012351729.1">
    <property type="nucleotide sequence ID" value="NC_010528.1"/>
</dbReference>
<dbReference type="SMR" id="B2AH15"/>
<dbReference type="GeneID" id="29762355"/>
<dbReference type="KEGG" id="cti:RALTA_A0395"/>
<dbReference type="eggNOG" id="COG0173">
    <property type="taxonomic scope" value="Bacteria"/>
</dbReference>
<dbReference type="HOGENOM" id="CLU_014330_3_2_4"/>
<dbReference type="BioCyc" id="CTAI977880:RALTA_RS01935-MONOMER"/>
<dbReference type="Proteomes" id="UP000001692">
    <property type="component" value="Chromosome 1"/>
</dbReference>
<dbReference type="GO" id="GO:0005737">
    <property type="term" value="C:cytoplasm"/>
    <property type="evidence" value="ECO:0007669"/>
    <property type="project" value="UniProtKB-SubCell"/>
</dbReference>
<dbReference type="GO" id="GO:0004815">
    <property type="term" value="F:aspartate-tRNA ligase activity"/>
    <property type="evidence" value="ECO:0007669"/>
    <property type="project" value="UniProtKB-UniRule"/>
</dbReference>
<dbReference type="GO" id="GO:0050560">
    <property type="term" value="F:aspartate-tRNA(Asn) ligase activity"/>
    <property type="evidence" value="ECO:0007669"/>
    <property type="project" value="UniProtKB-EC"/>
</dbReference>
<dbReference type="GO" id="GO:0005524">
    <property type="term" value="F:ATP binding"/>
    <property type="evidence" value="ECO:0007669"/>
    <property type="project" value="UniProtKB-UniRule"/>
</dbReference>
<dbReference type="GO" id="GO:0003676">
    <property type="term" value="F:nucleic acid binding"/>
    <property type="evidence" value="ECO:0007669"/>
    <property type="project" value="InterPro"/>
</dbReference>
<dbReference type="GO" id="GO:0006422">
    <property type="term" value="P:aspartyl-tRNA aminoacylation"/>
    <property type="evidence" value="ECO:0007669"/>
    <property type="project" value="UniProtKB-UniRule"/>
</dbReference>
<dbReference type="CDD" id="cd00777">
    <property type="entry name" value="AspRS_core"/>
    <property type="match status" value="1"/>
</dbReference>
<dbReference type="CDD" id="cd04317">
    <property type="entry name" value="EcAspRS_like_N"/>
    <property type="match status" value="1"/>
</dbReference>
<dbReference type="Gene3D" id="3.30.930.10">
    <property type="entry name" value="Bira Bifunctional Protein, Domain 2"/>
    <property type="match status" value="1"/>
</dbReference>
<dbReference type="Gene3D" id="3.30.1360.30">
    <property type="entry name" value="GAD-like domain"/>
    <property type="match status" value="1"/>
</dbReference>
<dbReference type="Gene3D" id="2.40.50.140">
    <property type="entry name" value="Nucleic acid-binding proteins"/>
    <property type="match status" value="1"/>
</dbReference>
<dbReference type="HAMAP" id="MF_00044">
    <property type="entry name" value="Asp_tRNA_synth_type1"/>
    <property type="match status" value="1"/>
</dbReference>
<dbReference type="InterPro" id="IPR004364">
    <property type="entry name" value="Aa-tRNA-synt_II"/>
</dbReference>
<dbReference type="InterPro" id="IPR006195">
    <property type="entry name" value="aa-tRNA-synth_II"/>
</dbReference>
<dbReference type="InterPro" id="IPR045864">
    <property type="entry name" value="aa-tRNA-synth_II/BPL/LPL"/>
</dbReference>
<dbReference type="InterPro" id="IPR004524">
    <property type="entry name" value="Asp-tRNA-ligase_1"/>
</dbReference>
<dbReference type="InterPro" id="IPR047089">
    <property type="entry name" value="Asp-tRNA-ligase_1_N"/>
</dbReference>
<dbReference type="InterPro" id="IPR002312">
    <property type="entry name" value="Asp/Asn-tRNA-synth_IIb"/>
</dbReference>
<dbReference type="InterPro" id="IPR047090">
    <property type="entry name" value="AspRS_core"/>
</dbReference>
<dbReference type="InterPro" id="IPR004115">
    <property type="entry name" value="GAD-like_sf"/>
</dbReference>
<dbReference type="InterPro" id="IPR029351">
    <property type="entry name" value="GAD_dom"/>
</dbReference>
<dbReference type="InterPro" id="IPR012340">
    <property type="entry name" value="NA-bd_OB-fold"/>
</dbReference>
<dbReference type="InterPro" id="IPR004365">
    <property type="entry name" value="NA-bd_OB_tRNA"/>
</dbReference>
<dbReference type="NCBIfam" id="TIGR00459">
    <property type="entry name" value="aspS_bact"/>
    <property type="match status" value="1"/>
</dbReference>
<dbReference type="NCBIfam" id="NF001750">
    <property type="entry name" value="PRK00476.1"/>
    <property type="match status" value="1"/>
</dbReference>
<dbReference type="PANTHER" id="PTHR22594:SF5">
    <property type="entry name" value="ASPARTATE--TRNA LIGASE, MITOCHONDRIAL"/>
    <property type="match status" value="1"/>
</dbReference>
<dbReference type="PANTHER" id="PTHR22594">
    <property type="entry name" value="ASPARTYL/LYSYL-TRNA SYNTHETASE"/>
    <property type="match status" value="1"/>
</dbReference>
<dbReference type="Pfam" id="PF02938">
    <property type="entry name" value="GAD"/>
    <property type="match status" value="1"/>
</dbReference>
<dbReference type="Pfam" id="PF00152">
    <property type="entry name" value="tRNA-synt_2"/>
    <property type="match status" value="1"/>
</dbReference>
<dbReference type="Pfam" id="PF01336">
    <property type="entry name" value="tRNA_anti-codon"/>
    <property type="match status" value="1"/>
</dbReference>
<dbReference type="PRINTS" id="PR01042">
    <property type="entry name" value="TRNASYNTHASP"/>
</dbReference>
<dbReference type="SUPFAM" id="SSF55681">
    <property type="entry name" value="Class II aaRS and biotin synthetases"/>
    <property type="match status" value="1"/>
</dbReference>
<dbReference type="SUPFAM" id="SSF55261">
    <property type="entry name" value="GAD domain-like"/>
    <property type="match status" value="1"/>
</dbReference>
<dbReference type="SUPFAM" id="SSF50249">
    <property type="entry name" value="Nucleic acid-binding proteins"/>
    <property type="match status" value="1"/>
</dbReference>
<dbReference type="PROSITE" id="PS50862">
    <property type="entry name" value="AA_TRNA_LIGASE_II"/>
    <property type="match status" value="1"/>
</dbReference>
<reference key="1">
    <citation type="journal article" date="2008" name="Genome Res.">
        <title>Genome sequence of the beta-rhizobium Cupriavidus taiwanensis and comparative genomics of rhizobia.</title>
        <authorList>
            <person name="Amadou C."/>
            <person name="Pascal G."/>
            <person name="Mangenot S."/>
            <person name="Glew M."/>
            <person name="Bontemps C."/>
            <person name="Capela D."/>
            <person name="Carrere S."/>
            <person name="Cruveiller S."/>
            <person name="Dossat C."/>
            <person name="Lajus A."/>
            <person name="Marchetti M."/>
            <person name="Poinsot V."/>
            <person name="Rouy Z."/>
            <person name="Servin B."/>
            <person name="Saad M."/>
            <person name="Schenowitz C."/>
            <person name="Barbe V."/>
            <person name="Batut J."/>
            <person name="Medigue C."/>
            <person name="Masson-Boivin C."/>
        </authorList>
    </citation>
    <scope>NUCLEOTIDE SEQUENCE [LARGE SCALE GENOMIC DNA]</scope>
    <source>
        <strain>DSM 17343 / BCRC 17206 / CCUG 44338 / CIP 107171 / LMG 19424 / R1</strain>
    </source>
</reference>
<organism>
    <name type="scientific">Cupriavidus taiwanensis (strain DSM 17343 / BCRC 17206 / CCUG 44338 / CIP 107171 / LMG 19424 / R1)</name>
    <name type="common">Ralstonia taiwanensis (strain LMG 19424)</name>
    <dbReference type="NCBI Taxonomy" id="977880"/>
    <lineage>
        <taxon>Bacteria</taxon>
        <taxon>Pseudomonadati</taxon>
        <taxon>Pseudomonadota</taxon>
        <taxon>Betaproteobacteria</taxon>
        <taxon>Burkholderiales</taxon>
        <taxon>Burkholderiaceae</taxon>
        <taxon>Cupriavidus</taxon>
    </lineage>
</organism>